<gene>
    <name evidence="5" type="primary">Dele1</name>
    <name evidence="1" type="synonym">Dele</name>
    <name evidence="1" type="synonym">Kiaa0141</name>
</gene>
<name>DELE1_MOUSE</name>
<keyword id="KW-0053">Apoptosis</keyword>
<keyword id="KW-0963">Cytoplasm</keyword>
<keyword id="KW-0227">DNA damage</keyword>
<keyword id="KW-0472">Membrane</keyword>
<keyword id="KW-0496">Mitochondrion</keyword>
<keyword id="KW-0999">Mitochondrion inner membrane</keyword>
<keyword id="KW-1000">Mitochondrion outer membrane</keyword>
<keyword id="KW-1185">Reference proteome</keyword>
<keyword id="KW-0677">Repeat</keyword>
<keyword id="KW-0802">TPR repeat</keyword>
<keyword id="KW-0809">Transit peptide</keyword>
<keyword id="KW-0832">Ubl conjugation</keyword>
<accession>Q9DCV6</accession>
<accession>Q6A0B8</accession>
<feature type="transit peptide" description="Mitochondrion" evidence="2">
    <location>
        <begin position="1"/>
        <end position="23"/>
    </location>
</feature>
<feature type="propeptide" id="PRO_0000459061" description="Extended MTS" evidence="1">
    <location>
        <begin position="24"/>
        <end position="101"/>
    </location>
</feature>
<feature type="chain" id="PRO_0000050722" description="DAP3-binding cell death enhancer 1">
    <location>
        <begin position="102"/>
        <end position="510"/>
    </location>
</feature>
<feature type="chain" id="PRO_0000450309" description="DAP3-binding cell death enhancer 1 short form" evidence="1">
    <location>
        <begin position="142" status="uncertain"/>
        <end position="510"/>
    </location>
</feature>
<feature type="repeat" description="TPR 1" evidence="2">
    <location>
        <begin position="213"/>
        <end position="245"/>
    </location>
</feature>
<feature type="repeat" description="TPR 2" evidence="2">
    <location>
        <begin position="246"/>
        <end position="278"/>
    </location>
</feature>
<feature type="repeat" description="TPR 3" evidence="2">
    <location>
        <begin position="279"/>
        <end position="313"/>
    </location>
</feature>
<feature type="repeat" description="TPR 4" evidence="2">
    <location>
        <begin position="314"/>
        <end position="351"/>
    </location>
</feature>
<feature type="repeat" description="TPR 5" evidence="2">
    <location>
        <begin position="352"/>
        <end position="385"/>
    </location>
</feature>
<feature type="repeat" description="TPR 6" evidence="2">
    <location>
        <begin position="386"/>
        <end position="423"/>
    </location>
</feature>
<feature type="repeat" description="TPR 7" evidence="2">
    <location>
        <begin position="471"/>
        <end position="499"/>
    </location>
</feature>
<feature type="region of interest" description="Disordered" evidence="3">
    <location>
        <begin position="19"/>
        <end position="61"/>
    </location>
</feature>
<feature type="region of interest" description="Disordered" evidence="3">
    <location>
        <begin position="142"/>
        <end position="185"/>
    </location>
</feature>
<feature type="short sequence motif" description="SIFI-degron" evidence="1">
    <location>
        <begin position="307"/>
        <end position="326"/>
    </location>
</feature>
<feature type="compositionally biased region" description="Low complexity" evidence="3">
    <location>
        <begin position="35"/>
        <end position="45"/>
    </location>
</feature>
<feature type="compositionally biased region" description="Basic and acidic residues" evidence="3">
    <location>
        <begin position="46"/>
        <end position="61"/>
    </location>
</feature>
<feature type="compositionally biased region" description="Basic and acidic residues" evidence="3">
    <location>
        <begin position="155"/>
        <end position="167"/>
    </location>
</feature>
<feature type="compositionally biased region" description="Polar residues" evidence="3">
    <location>
        <begin position="169"/>
        <end position="181"/>
    </location>
</feature>
<feature type="site" description="Cleavage; by OMA1" evidence="1">
    <location>
        <begin position="141"/>
        <end position="142"/>
    </location>
</feature>
<sequence length="510" mass="55430">MWRLTGILGRALPRLLGPGFRGITPKPTSSDGSQTTSPTLPLTRLSFDRSGSHGSKRSRDPKCCGWKDAFHWMSAHVSPNTLRDAISWGTLAVLALHLARQIHFHAPLVAGPQPAERSWHSPLYRFLSSSWWHPHSSLRRHVLPRSDCPAPRNTGLREPRQGQEDHPSAPSQCLPSDSSLRSGLLNLPEEEPSDFDFLHASRDFASQAKAAEAHPPGGKNEQDKAKALPLEEAVTSIQQLFQLSVAITFNFLGTENIKTGDYTAAFSYFQKAADRGYSKAQYNVGLCLEHGRGTPRDLSKAILFYHLAAVQGHSLAQYRYARCLLQSPGSLSDPERERAVSLLKQAADSGLTEAQAFLGVLFTKEPHLDEQRAVKYLWLAASNGDSQSRFHLGICYEKGLGAQRNLGEAVKCYQQAAAMGNEPARERLRTLFNVEAAGPSHLATTGLKSFSSPSLCSLNTLLAGASGLPHASSTGNLGLLCRSGHLGASHGAPSRTIPSLERSLVRLGFG</sequence>
<dbReference type="EMBL" id="AK002437">
    <property type="protein sequence ID" value="BAB22100.1"/>
    <property type="molecule type" value="mRNA"/>
</dbReference>
<dbReference type="EMBL" id="AK172900">
    <property type="protein sequence ID" value="BAD32178.1"/>
    <property type="status" value="ALT_INIT"/>
    <property type="molecule type" value="mRNA"/>
</dbReference>
<dbReference type="CCDS" id="CCDS50260.1"/>
<dbReference type="RefSeq" id="NP_077141.2">
    <property type="nucleotide sequence ID" value="NM_024179.5"/>
</dbReference>
<dbReference type="SMR" id="Q9DCV6"/>
<dbReference type="FunCoup" id="Q9DCV6">
    <property type="interactions" value="1867"/>
</dbReference>
<dbReference type="STRING" id="10090.ENSMUSP00000025314"/>
<dbReference type="PhosphoSitePlus" id="Q9DCV6"/>
<dbReference type="PaxDb" id="10090-ENSMUSP00000025314"/>
<dbReference type="ProteomicsDB" id="279366"/>
<dbReference type="Antibodypedia" id="27388">
    <property type="antibodies" value="63 antibodies from 25 providers"/>
</dbReference>
<dbReference type="DNASU" id="66839"/>
<dbReference type="Ensembl" id="ENSMUST00000025314.7">
    <property type="protein sequence ID" value="ENSMUSP00000025314.6"/>
    <property type="gene ID" value="ENSMUSG00000024442.7"/>
</dbReference>
<dbReference type="Ensembl" id="ENSMUST00000235904.2">
    <property type="protein sequence ID" value="ENSMUSP00000157678.2"/>
    <property type="gene ID" value="ENSMUSG00000024442.7"/>
</dbReference>
<dbReference type="GeneID" id="66839"/>
<dbReference type="KEGG" id="mmu:66839"/>
<dbReference type="UCSC" id="uc008erz.2">
    <property type="organism name" value="mouse"/>
</dbReference>
<dbReference type="AGR" id="MGI:1914089"/>
<dbReference type="CTD" id="9812"/>
<dbReference type="MGI" id="MGI:1914089">
    <property type="gene designation" value="Dele1"/>
</dbReference>
<dbReference type="VEuPathDB" id="HostDB:ENSMUSG00000024442"/>
<dbReference type="eggNOG" id="KOG1550">
    <property type="taxonomic scope" value="Eukaryota"/>
</dbReference>
<dbReference type="GeneTree" id="ENSGT00390000002137"/>
<dbReference type="HOGENOM" id="CLU_039734_0_0_1"/>
<dbReference type="InParanoid" id="Q9DCV6"/>
<dbReference type="OMA" id="HAWSTGN"/>
<dbReference type="OrthoDB" id="2384430at2759"/>
<dbReference type="PhylomeDB" id="Q9DCV6"/>
<dbReference type="TreeFam" id="TF329996"/>
<dbReference type="Reactome" id="R-MMU-9840373">
    <property type="pathway name" value="Cellular response to mitochondrial stress"/>
</dbReference>
<dbReference type="BioGRID-ORCS" id="66839">
    <property type="hits" value="6 hits in 77 CRISPR screens"/>
</dbReference>
<dbReference type="ChiTaRS" id="Dele1">
    <property type="organism name" value="mouse"/>
</dbReference>
<dbReference type="PRO" id="PR:Q9DCV6"/>
<dbReference type="Proteomes" id="UP000000589">
    <property type="component" value="Chromosome 18"/>
</dbReference>
<dbReference type="RNAct" id="Q9DCV6">
    <property type="molecule type" value="protein"/>
</dbReference>
<dbReference type="Bgee" id="ENSMUSG00000024442">
    <property type="expression patterns" value="Expressed in hindlimb stylopod muscle and 235 other cell types or tissues"/>
</dbReference>
<dbReference type="ExpressionAtlas" id="Q9DCV6">
    <property type="expression patterns" value="baseline and differential"/>
</dbReference>
<dbReference type="GO" id="GO:0005829">
    <property type="term" value="C:cytosol"/>
    <property type="evidence" value="ECO:0007669"/>
    <property type="project" value="UniProtKB-SubCell"/>
</dbReference>
<dbReference type="GO" id="GO:0005743">
    <property type="term" value="C:mitochondrial inner membrane"/>
    <property type="evidence" value="ECO:0007669"/>
    <property type="project" value="UniProtKB-SubCell"/>
</dbReference>
<dbReference type="GO" id="GO:0005741">
    <property type="term" value="C:mitochondrial outer membrane"/>
    <property type="evidence" value="ECO:0007669"/>
    <property type="project" value="UniProtKB-SubCell"/>
</dbReference>
<dbReference type="GO" id="GO:0005739">
    <property type="term" value="C:mitochondrion"/>
    <property type="evidence" value="ECO:0007005"/>
    <property type="project" value="MGI"/>
</dbReference>
<dbReference type="GO" id="GO:0043539">
    <property type="term" value="F:protein serine/threonine kinase activator activity"/>
    <property type="evidence" value="ECO:0007669"/>
    <property type="project" value="Ensembl"/>
</dbReference>
<dbReference type="GO" id="GO:0006974">
    <property type="term" value="P:DNA damage response"/>
    <property type="evidence" value="ECO:0000250"/>
    <property type="project" value="UniProtKB"/>
</dbReference>
<dbReference type="GO" id="GO:0008625">
    <property type="term" value="P:extrinsic apoptotic signaling pathway via death domain receptors"/>
    <property type="evidence" value="ECO:0000250"/>
    <property type="project" value="UniProtKB"/>
</dbReference>
<dbReference type="GO" id="GO:0140468">
    <property type="term" value="P:HRI-mediated signaling"/>
    <property type="evidence" value="ECO:0007669"/>
    <property type="project" value="Ensembl"/>
</dbReference>
<dbReference type="GO" id="GO:1901526">
    <property type="term" value="P:positive regulation of mitophagy"/>
    <property type="evidence" value="ECO:0007669"/>
    <property type="project" value="Ensembl"/>
</dbReference>
<dbReference type="GO" id="GO:1990641">
    <property type="term" value="P:response to iron ion starvation"/>
    <property type="evidence" value="ECO:0007669"/>
    <property type="project" value="Ensembl"/>
</dbReference>
<dbReference type="FunFam" id="1.25.40.10:FF:000267">
    <property type="entry name" value="DAP3 binding cell death enhancer 1"/>
    <property type="match status" value="1"/>
</dbReference>
<dbReference type="Gene3D" id="1.25.40.10">
    <property type="entry name" value="Tetratricopeptide repeat domain"/>
    <property type="match status" value="1"/>
</dbReference>
<dbReference type="InterPro" id="IPR052748">
    <property type="entry name" value="ISR_Activator"/>
</dbReference>
<dbReference type="InterPro" id="IPR006597">
    <property type="entry name" value="Sel1-like"/>
</dbReference>
<dbReference type="InterPro" id="IPR011990">
    <property type="entry name" value="TPR-like_helical_dom_sf"/>
</dbReference>
<dbReference type="PANTHER" id="PTHR45011">
    <property type="entry name" value="DAP3-BINDING CELL DEATH ENHANCER 1"/>
    <property type="match status" value="1"/>
</dbReference>
<dbReference type="PANTHER" id="PTHR45011:SF1">
    <property type="entry name" value="DAP3-BINDING CELL DEATH ENHANCER 1"/>
    <property type="match status" value="1"/>
</dbReference>
<dbReference type="Pfam" id="PF08238">
    <property type="entry name" value="Sel1"/>
    <property type="match status" value="5"/>
</dbReference>
<dbReference type="SMART" id="SM00671">
    <property type="entry name" value="SEL1"/>
    <property type="match status" value="5"/>
</dbReference>
<dbReference type="SUPFAM" id="SSF81901">
    <property type="entry name" value="HCP-like"/>
    <property type="match status" value="1"/>
</dbReference>
<organism>
    <name type="scientific">Mus musculus</name>
    <name type="common">Mouse</name>
    <dbReference type="NCBI Taxonomy" id="10090"/>
    <lineage>
        <taxon>Eukaryota</taxon>
        <taxon>Metazoa</taxon>
        <taxon>Chordata</taxon>
        <taxon>Craniata</taxon>
        <taxon>Vertebrata</taxon>
        <taxon>Euteleostomi</taxon>
        <taxon>Mammalia</taxon>
        <taxon>Eutheria</taxon>
        <taxon>Euarchontoglires</taxon>
        <taxon>Glires</taxon>
        <taxon>Rodentia</taxon>
        <taxon>Myomorpha</taxon>
        <taxon>Muroidea</taxon>
        <taxon>Muridae</taxon>
        <taxon>Murinae</taxon>
        <taxon>Mus</taxon>
        <taxon>Mus</taxon>
    </lineage>
</organism>
<evidence type="ECO:0000250" key="1">
    <source>
        <dbReference type="UniProtKB" id="Q14154"/>
    </source>
</evidence>
<evidence type="ECO:0000255" key="2"/>
<evidence type="ECO:0000256" key="3">
    <source>
        <dbReference type="SAM" id="MobiDB-lite"/>
    </source>
</evidence>
<evidence type="ECO:0000305" key="4"/>
<evidence type="ECO:0000312" key="5">
    <source>
        <dbReference type="MGI" id="MGI:1914089"/>
    </source>
</evidence>
<protein>
    <recommendedName>
        <fullName evidence="5">DAP3-binding cell death enhancer 1</fullName>
    </recommendedName>
    <alternativeName>
        <fullName evidence="1">DAP3-binding cell death enhancer 1, long form</fullName>
        <shortName evidence="1">DELE1(L)</shortName>
    </alternativeName>
    <alternativeName>
        <fullName evidence="1">Death ligand signal enhancer</fullName>
    </alternativeName>
    <component>
        <recommendedName>
            <fullName evidence="1">DAP3-binding cell death enhancer 1 short form</fullName>
            <shortName evidence="1">DELE1(S)</shortName>
            <shortName evidence="1">S-DELE1</shortName>
        </recommendedName>
    </component>
</protein>
<proteinExistence type="evidence at transcript level"/>
<comment type="function">
    <text evidence="1">Protein kinase activator that acts as a key activator of the integrated stress response (ISR) following various stresses, such as iron deficiency, mitochondrial stress or mitochondrial DNA breaks. Detects impaired protein import and processing in mitochondria, activating the ISR. May also required for the induction of death receptor-mediated apoptosis through the regulation of caspase activation.</text>
</comment>
<comment type="function">
    <molecule>DAP3-binding cell death enhancer 1</molecule>
    <text evidence="1">Protein kinase activator that activates the ISR in response to iron deficiency: iron deficiency impairs mitochondrial import, promoting DELE1 localization at the mitochondrial surface, where it binds and activates EIF2AK1/HRI to trigger the ISR.</text>
</comment>
<comment type="function">
    <molecule>DAP3-binding cell death enhancer 1 short form</molecule>
    <text evidence="1">Protein kinase activator generated by protein cleavage in response to mitochondrial stress, which accumulates in the cytosol and specifically binds to and activates the protein kinase activity of EIF2AK1/HRI (By similarity). It thereby activates the integrated stress response (ISR): EIF2AK1/HRI activation promotes eIF-2-alpha (EIF2S1) phosphorylation, leading to a decrease in global protein synthesis and the induction of selected genes, including the transcription factor ATF4, the master transcriptional regulator of the ISR (By similarity). Also acts as an activator of PRKN-independent mitophagy: activates the protein kinase activity of EIF2AK1/HRI in response to mitochondrial damage, promoting eIF-2-alpha (EIF2S1) phosphorylation, leading to mitochondrial localization of EIF2S1 followed by induction of mitophagy (By similarity).</text>
</comment>
<comment type="subunit">
    <text evidence="1">Interacts with DAP3.</text>
</comment>
<comment type="subunit">
    <molecule>DAP3-binding cell death enhancer 1</molecule>
    <text evidence="1">Interacts (via TPR repeats) with EIF2AK1/HRI; activating the protein kinase activity of EIF2AK1/HRI, thereby promoting the integrated stress response (ISR).</text>
</comment>
<comment type="subunit">
    <molecule>DAP3-binding cell death enhancer 1 short form</molecule>
    <text evidence="1">Homooctamer; oligomerization is required to activate EIF2AK1/HRI. Interacts (via TPR repeats) with EIF2AK1/HRI; activating the protein kinase activity of EIF2AK1/HRI, thereby promoting the integrated stress response (ISR).</text>
</comment>
<comment type="subcellular location">
    <molecule>DAP3-binding cell death enhancer 1</molecule>
    <subcellularLocation>
        <location evidence="1">Mitochondrion</location>
    </subcellularLocation>
    <subcellularLocation>
        <location evidence="1">Mitochondrion outer membrane</location>
    </subcellularLocation>
    <subcellularLocation>
        <location evidence="1">Mitochondrion inner membrane</location>
    </subcellularLocation>
    <text evidence="1">Imported in the mitochondrial matrix in absence of stress, leading to its degradation by LONP1. Localizes at the mitochondrial surface in response to iron deficiency: iron deficiency impairs mitochondrial import, promoting localization at the mitochondrial surface and stabilization. Associates with the mitochondrion inner membrane in response to mitochondrial stress, leading to its proteolytic processing by OMA1, and generation of the AP3-binding cell death enhancer 1 short form (DELE1(S) or S-DELE1).</text>
</comment>
<comment type="subcellular location">
    <molecule>DAP3-binding cell death enhancer 1 short form</molecule>
    <subcellularLocation>
        <location evidence="1">Cytoplasm</location>
        <location evidence="1">Cytosol</location>
    </subcellularLocation>
    <text evidence="1">This short form is generated by proteolytic processing by OMA1 in response to mitochondrial stress, leading to translocation to the cytosol.</text>
</comment>
<comment type="domain">
    <text evidence="1">The TPR repeats bind to and activate EIF2AK1/HRI.</text>
</comment>
<comment type="PTM">
    <molecule>DAP3-binding cell death enhancer 1</molecule>
    <text evidence="1">Unstable protein in absence of stress: imported in the mitochondrial matrix following processing by the mitochondrial-processing peptidase (MPP), where it is degraded by LONP1. Stabilized in response to iron deficiency: iron deficiency impairs mitochondrial import, promoting localization at the mitochondrial surface and stabilization. Cleaved by OMA1 in response to mitochondrial stress, generating the DAP3-binding cell death enhancer 1 short form (DELE1(S) or S-DELE1) that accumulates in the cytosol and activates the protein kinase activity of EIF2AK1/HRI. Protein cleavage by OMA1 can take place at different positions, and apparently does not require a specific sequence motif.</text>
</comment>
<comment type="PTM">
    <molecule>DAP3-binding cell death enhancer 1 short form</molecule>
    <text evidence="1">Ubiquitinated and degraded by the SIFI complex once the mitochondrial stress has been resolved, thereby providing stress response silencing. Within the SIFI complex, UBR4 initiates ubiquitin chain that are further elongated or branched by KCMF1.</text>
</comment>
<comment type="similarity">
    <text evidence="4">Belongs to the DELE1 family.</text>
</comment>
<comment type="sequence caution" evidence="4">
    <conflict type="erroneous initiation">
        <sequence resource="EMBL-CDS" id="BAD32178"/>
    </conflict>
    <text>Extended N-terminus.</text>
</comment>
<reference key="1">
    <citation type="journal article" date="2005" name="Science">
        <title>The transcriptional landscape of the mammalian genome.</title>
        <authorList>
            <person name="Carninci P."/>
            <person name="Kasukawa T."/>
            <person name="Katayama S."/>
            <person name="Gough J."/>
            <person name="Frith M.C."/>
            <person name="Maeda N."/>
            <person name="Oyama R."/>
            <person name="Ravasi T."/>
            <person name="Lenhard B."/>
            <person name="Wells C."/>
            <person name="Kodzius R."/>
            <person name="Shimokawa K."/>
            <person name="Bajic V.B."/>
            <person name="Brenner S.E."/>
            <person name="Batalov S."/>
            <person name="Forrest A.R."/>
            <person name="Zavolan M."/>
            <person name="Davis M.J."/>
            <person name="Wilming L.G."/>
            <person name="Aidinis V."/>
            <person name="Allen J.E."/>
            <person name="Ambesi-Impiombato A."/>
            <person name="Apweiler R."/>
            <person name="Aturaliya R.N."/>
            <person name="Bailey T.L."/>
            <person name="Bansal M."/>
            <person name="Baxter L."/>
            <person name="Beisel K.W."/>
            <person name="Bersano T."/>
            <person name="Bono H."/>
            <person name="Chalk A.M."/>
            <person name="Chiu K.P."/>
            <person name="Choudhary V."/>
            <person name="Christoffels A."/>
            <person name="Clutterbuck D.R."/>
            <person name="Crowe M.L."/>
            <person name="Dalla E."/>
            <person name="Dalrymple B.P."/>
            <person name="de Bono B."/>
            <person name="Della Gatta G."/>
            <person name="di Bernardo D."/>
            <person name="Down T."/>
            <person name="Engstrom P."/>
            <person name="Fagiolini M."/>
            <person name="Faulkner G."/>
            <person name="Fletcher C.F."/>
            <person name="Fukushima T."/>
            <person name="Furuno M."/>
            <person name="Futaki S."/>
            <person name="Gariboldi M."/>
            <person name="Georgii-Hemming P."/>
            <person name="Gingeras T.R."/>
            <person name="Gojobori T."/>
            <person name="Green R.E."/>
            <person name="Gustincich S."/>
            <person name="Harbers M."/>
            <person name="Hayashi Y."/>
            <person name="Hensch T.K."/>
            <person name="Hirokawa N."/>
            <person name="Hill D."/>
            <person name="Huminiecki L."/>
            <person name="Iacono M."/>
            <person name="Ikeo K."/>
            <person name="Iwama A."/>
            <person name="Ishikawa T."/>
            <person name="Jakt M."/>
            <person name="Kanapin A."/>
            <person name="Katoh M."/>
            <person name="Kawasawa Y."/>
            <person name="Kelso J."/>
            <person name="Kitamura H."/>
            <person name="Kitano H."/>
            <person name="Kollias G."/>
            <person name="Krishnan S.P."/>
            <person name="Kruger A."/>
            <person name="Kummerfeld S.K."/>
            <person name="Kurochkin I.V."/>
            <person name="Lareau L.F."/>
            <person name="Lazarevic D."/>
            <person name="Lipovich L."/>
            <person name="Liu J."/>
            <person name="Liuni S."/>
            <person name="McWilliam S."/>
            <person name="Madan Babu M."/>
            <person name="Madera M."/>
            <person name="Marchionni L."/>
            <person name="Matsuda H."/>
            <person name="Matsuzawa S."/>
            <person name="Miki H."/>
            <person name="Mignone F."/>
            <person name="Miyake S."/>
            <person name="Morris K."/>
            <person name="Mottagui-Tabar S."/>
            <person name="Mulder N."/>
            <person name="Nakano N."/>
            <person name="Nakauchi H."/>
            <person name="Ng P."/>
            <person name="Nilsson R."/>
            <person name="Nishiguchi S."/>
            <person name="Nishikawa S."/>
            <person name="Nori F."/>
            <person name="Ohara O."/>
            <person name="Okazaki Y."/>
            <person name="Orlando V."/>
            <person name="Pang K.C."/>
            <person name="Pavan W.J."/>
            <person name="Pavesi G."/>
            <person name="Pesole G."/>
            <person name="Petrovsky N."/>
            <person name="Piazza S."/>
            <person name="Reed J."/>
            <person name="Reid J.F."/>
            <person name="Ring B.Z."/>
            <person name="Ringwald M."/>
            <person name="Rost B."/>
            <person name="Ruan Y."/>
            <person name="Salzberg S.L."/>
            <person name="Sandelin A."/>
            <person name="Schneider C."/>
            <person name="Schoenbach C."/>
            <person name="Sekiguchi K."/>
            <person name="Semple C.A."/>
            <person name="Seno S."/>
            <person name="Sessa L."/>
            <person name="Sheng Y."/>
            <person name="Shibata Y."/>
            <person name="Shimada H."/>
            <person name="Shimada K."/>
            <person name="Silva D."/>
            <person name="Sinclair B."/>
            <person name="Sperling S."/>
            <person name="Stupka E."/>
            <person name="Sugiura K."/>
            <person name="Sultana R."/>
            <person name="Takenaka Y."/>
            <person name="Taki K."/>
            <person name="Tammoja K."/>
            <person name="Tan S.L."/>
            <person name="Tang S."/>
            <person name="Taylor M.S."/>
            <person name="Tegner J."/>
            <person name="Teichmann S.A."/>
            <person name="Ueda H.R."/>
            <person name="van Nimwegen E."/>
            <person name="Verardo R."/>
            <person name="Wei C.L."/>
            <person name="Yagi K."/>
            <person name="Yamanishi H."/>
            <person name="Zabarovsky E."/>
            <person name="Zhu S."/>
            <person name="Zimmer A."/>
            <person name="Hide W."/>
            <person name="Bult C."/>
            <person name="Grimmond S.M."/>
            <person name="Teasdale R.D."/>
            <person name="Liu E.T."/>
            <person name="Brusic V."/>
            <person name="Quackenbush J."/>
            <person name="Wahlestedt C."/>
            <person name="Mattick J.S."/>
            <person name="Hume D.A."/>
            <person name="Kai C."/>
            <person name="Sasaki D."/>
            <person name="Tomaru Y."/>
            <person name="Fukuda S."/>
            <person name="Kanamori-Katayama M."/>
            <person name="Suzuki M."/>
            <person name="Aoki J."/>
            <person name="Arakawa T."/>
            <person name="Iida J."/>
            <person name="Imamura K."/>
            <person name="Itoh M."/>
            <person name="Kato T."/>
            <person name="Kawaji H."/>
            <person name="Kawagashira N."/>
            <person name="Kawashima T."/>
            <person name="Kojima M."/>
            <person name="Kondo S."/>
            <person name="Konno H."/>
            <person name="Nakano K."/>
            <person name="Ninomiya N."/>
            <person name="Nishio T."/>
            <person name="Okada M."/>
            <person name="Plessy C."/>
            <person name="Shibata K."/>
            <person name="Shiraki T."/>
            <person name="Suzuki S."/>
            <person name="Tagami M."/>
            <person name="Waki K."/>
            <person name="Watahiki A."/>
            <person name="Okamura-Oho Y."/>
            <person name="Suzuki H."/>
            <person name="Kawai J."/>
            <person name="Hayashizaki Y."/>
        </authorList>
    </citation>
    <scope>NUCLEOTIDE SEQUENCE [LARGE SCALE MRNA]</scope>
    <source>
        <strain>C57BL/6J</strain>
        <tissue>Kidney</tissue>
    </source>
</reference>
<reference key="2">
    <citation type="journal article" date="2004" name="DNA Res.">
        <title>Prediction of the coding sequences of mouse homologues of KIAA gene: IV. The complete nucleotide sequences of 500 mouse KIAA-homologous cDNAs identified by screening of terminal sequences of cDNA clones randomly sampled from size-fractionated libraries.</title>
        <authorList>
            <person name="Okazaki N."/>
            <person name="Kikuno R."/>
            <person name="Ohara R."/>
            <person name="Inamoto S."/>
            <person name="Koseki H."/>
            <person name="Hiraoka S."/>
            <person name="Saga Y."/>
            <person name="Seino S."/>
            <person name="Nishimura M."/>
            <person name="Kaisho T."/>
            <person name="Hoshino K."/>
            <person name="Kitamura H."/>
            <person name="Nagase T."/>
            <person name="Ohara O."/>
            <person name="Koga H."/>
        </authorList>
    </citation>
    <scope>NUCLEOTIDE SEQUENCE [LARGE SCALE MRNA]</scope>
    <source>
        <tissue>Embryonic intestine</tissue>
    </source>
</reference>